<comment type="function">
    <text evidence="2">Upon acetylcholine binding, the AChR responds by an extensive change in conformation that affects all subunits and leads to opening of an ion-conducting channel across the plasma membrane (By similarity). Does not bind alpha-bungarotoxin.</text>
</comment>
<comment type="catalytic activity">
    <reaction evidence="3">
        <text>K(+)(in) = K(+)(out)</text>
        <dbReference type="Rhea" id="RHEA:29463"/>
        <dbReference type="ChEBI" id="CHEBI:29103"/>
    </reaction>
</comment>
<comment type="catalytic activity">
    <reaction evidence="3">
        <text>Na(+)(in) = Na(+)(out)</text>
        <dbReference type="Rhea" id="RHEA:34963"/>
        <dbReference type="ChEBI" id="CHEBI:29101"/>
    </reaction>
</comment>
<comment type="subunit">
    <text evidence="2">One of the alpha chains that assemble within the acetylcholine receptor, a pentamer of two alpha chains, a beta, a delta, and a gamma or epsilon chains.</text>
</comment>
<comment type="subcellular location">
    <subcellularLocation>
        <location evidence="2">Postsynaptic cell membrane</location>
        <topology evidence="4">Multi-pass membrane protein</topology>
    </subcellularLocation>
    <subcellularLocation>
        <location evidence="2">Cell membrane</location>
        <topology evidence="4">Multi-pass membrane protein</topology>
    </subcellularLocation>
</comment>
<comment type="similarity">
    <text evidence="5">Belongs to the ligand-gated ion channel (TC 1.A.9) family. Acetylcholine receptor (TC 1.A.9.1) subfamily. Alpha-1/CHRNA1 sub-subfamily.</text>
</comment>
<proteinExistence type="inferred from homology"/>
<protein>
    <recommendedName>
        <fullName>Acetylcholine receptor subunit alpha</fullName>
    </recommendedName>
</protein>
<name>ACHA_NATTE</name>
<gene>
    <name type="primary">CHRNA1</name>
</gene>
<reference key="1">
    <citation type="journal article" date="1989" name="Proc. Natl. Acad. Sci. U.S.A.">
        <title>Snake acetylcholine receptor: cloning of the domain containing the four extracellular cysteines of the alpha subunit.</title>
        <authorList>
            <person name="Neumann D."/>
            <person name="Barchan D."/>
            <person name="Horowitz M."/>
            <person name="Kochva E."/>
            <person name="Fuchs S."/>
        </authorList>
    </citation>
    <scope>NUCLEOTIDE SEQUENCE [GENOMIC DNA]</scope>
    <source>
        <tissue>Liver</tissue>
    </source>
</reference>
<feature type="chain" id="PRO_0000076976" description="Acetylcholine receptor subunit alpha">
    <location>
        <begin position="1" status="less than"/>
        <end position="127" status="greater than"/>
    </location>
</feature>
<feature type="topological domain" description="Extracellular">
    <location>
        <begin position="1" status="less than"/>
        <end position="127" status="greater than"/>
    </location>
</feature>
<feature type="site" description="Confers toxin resistance" evidence="4">
    <location>
        <position position="92"/>
    </location>
</feature>
<feature type="site" description="Confers toxin resistance" evidence="4">
    <location>
        <position position="94"/>
    </location>
</feature>
<feature type="site" description="Confers toxin resistance" evidence="4">
    <location>
        <position position="99"/>
    </location>
</feature>
<feature type="glycosylation site" description="N-linked (GlcNAc...) asparagine" evidence="5">
    <location>
        <position position="46"/>
    </location>
</feature>
<feature type="glycosylation site" description="N-linked (GlcNAc...) asparagine" evidence="4">
    <location>
        <position position="94"/>
    </location>
</feature>
<feature type="disulfide bond" evidence="1">
    <location>
        <begin position="33"/>
        <end position="47"/>
    </location>
</feature>
<feature type="disulfide bond" description="Associated with receptor activation" evidence="1">
    <location>
        <begin position="97"/>
        <end position="98"/>
    </location>
</feature>
<feature type="sequence conflict" description="In Ref. 1; AAA60451." evidence="5" ref="1">
    <original>Y</original>
    <variation>H</variation>
    <location>
        <position position="39"/>
    </location>
</feature>
<feature type="sequence conflict" description="In Ref. 1; AAA60451." evidence="5" ref="1">
    <original>R</original>
    <variation>W</variation>
    <location>
        <position position="54"/>
    </location>
</feature>
<feature type="sequence conflict" description="In Ref. 1; AAA60451." evidence="5" ref="1">
    <original>T</original>
    <variation>N</variation>
    <location>
        <position position="59"/>
    </location>
</feature>
<feature type="sequence conflict" description="In Ref. 1; AAA60451." evidence="5" ref="1">
    <original>A</original>
    <variation>D</variation>
    <location>
        <position position="62"/>
    </location>
</feature>
<feature type="sequence conflict" description="In Ref. 1; AAA60451." evidence="5" ref="1">
    <original>Y</original>
    <variation>S</variation>
    <location>
        <position position="64"/>
    </location>
</feature>
<feature type="non-terminal residue">
    <location>
        <position position="1"/>
    </location>
</feature>
<feature type="non-terminal residue">
    <location>
        <position position="127"/>
    </location>
</feature>
<keyword id="KW-1003">Cell membrane</keyword>
<keyword id="KW-1015">Disulfide bond</keyword>
<keyword id="KW-0325">Glycoprotein</keyword>
<keyword id="KW-0407">Ion channel</keyword>
<keyword id="KW-0406">Ion transport</keyword>
<keyword id="KW-1071">Ligand-gated ion channel</keyword>
<keyword id="KW-0472">Membrane</keyword>
<keyword id="KW-0628">Postsynaptic cell membrane</keyword>
<keyword id="KW-0675">Receptor</keyword>
<keyword id="KW-0770">Synapse</keyword>
<keyword id="KW-0813">Transport</keyword>
<accession>P14144</accession>
<evidence type="ECO:0000250" key="1"/>
<evidence type="ECO:0000250" key="2">
    <source>
        <dbReference type="UniProtKB" id="P02708"/>
    </source>
</evidence>
<evidence type="ECO:0000250" key="3">
    <source>
        <dbReference type="UniProtKB" id="P02709"/>
    </source>
</evidence>
<evidence type="ECO:0000255" key="4"/>
<evidence type="ECO:0000305" key="5"/>
<organism>
    <name type="scientific">Natrix tessellata</name>
    <name type="common">Dice snake</name>
    <name type="synonym">Coronella tessellata</name>
    <dbReference type="NCBI Taxonomy" id="8584"/>
    <lineage>
        <taxon>Eukaryota</taxon>
        <taxon>Metazoa</taxon>
        <taxon>Chordata</taxon>
        <taxon>Craniata</taxon>
        <taxon>Vertebrata</taxon>
        <taxon>Euteleostomi</taxon>
        <taxon>Lepidosauria</taxon>
        <taxon>Squamata</taxon>
        <taxon>Bifurcata</taxon>
        <taxon>Unidentata</taxon>
        <taxon>Episquamata</taxon>
        <taxon>Toxicofera</taxon>
        <taxon>Serpentes</taxon>
        <taxon>Colubroidea</taxon>
        <taxon>Colubridae</taxon>
        <taxon>Natricinae</taxon>
        <taxon>Natrix</taxon>
    </lineage>
</organism>
<sequence length="127" mass="14740">ADGIFAIDQFTKVLLNYTGHITWNPPAIFKSYCEIIVTYFPFDEQNCSMKLGTRTYDGTVVAIYPEGPRPDLSNYMQSGEWALKDYRGFWHSVNYSCCLDTPYLDITYHFILLRLPLYFIVNVIIPC</sequence>
<dbReference type="EMBL" id="M26389">
    <property type="protein sequence ID" value="AAA49387.1"/>
    <property type="molecule type" value="Genomic_DNA"/>
</dbReference>
<dbReference type="EMBL" id="M30045">
    <property type="protein sequence ID" value="AAA60451.1"/>
    <property type="molecule type" value="Genomic_DNA"/>
</dbReference>
<dbReference type="PIR" id="B41384">
    <property type="entry name" value="B41384"/>
</dbReference>
<dbReference type="SMR" id="P14144"/>
<dbReference type="GlyCosmos" id="P14144">
    <property type="glycosylation" value="2 sites, No reported glycans"/>
</dbReference>
<dbReference type="GO" id="GO:0045211">
    <property type="term" value="C:postsynaptic membrane"/>
    <property type="evidence" value="ECO:0007669"/>
    <property type="project" value="UniProtKB-SubCell"/>
</dbReference>
<dbReference type="GO" id="GO:0005230">
    <property type="term" value="F:extracellular ligand-gated monoatomic ion channel activity"/>
    <property type="evidence" value="ECO:0007669"/>
    <property type="project" value="InterPro"/>
</dbReference>
<dbReference type="GO" id="GO:0004888">
    <property type="term" value="F:transmembrane signaling receptor activity"/>
    <property type="evidence" value="ECO:0007669"/>
    <property type="project" value="InterPro"/>
</dbReference>
<dbReference type="FunFam" id="2.70.170.10:FF:000060">
    <property type="entry name" value="Nicotinic acetylcholine receptor subunit alpha4"/>
    <property type="match status" value="1"/>
</dbReference>
<dbReference type="Gene3D" id="2.70.170.10">
    <property type="entry name" value="Neurotransmitter-gated ion-channel ligand-binding domain"/>
    <property type="match status" value="1"/>
</dbReference>
<dbReference type="InterPro" id="IPR006202">
    <property type="entry name" value="Neur_chan_lig-bd"/>
</dbReference>
<dbReference type="InterPro" id="IPR036734">
    <property type="entry name" value="Neur_chan_lig-bd_sf"/>
</dbReference>
<dbReference type="InterPro" id="IPR006201">
    <property type="entry name" value="Neur_channel"/>
</dbReference>
<dbReference type="InterPro" id="IPR018000">
    <property type="entry name" value="Neurotransmitter_ion_chnl_CS"/>
</dbReference>
<dbReference type="PANTHER" id="PTHR18945">
    <property type="entry name" value="NEUROTRANSMITTER GATED ION CHANNEL"/>
    <property type="match status" value="1"/>
</dbReference>
<dbReference type="Pfam" id="PF02931">
    <property type="entry name" value="Neur_chan_LBD"/>
    <property type="match status" value="1"/>
</dbReference>
<dbReference type="PRINTS" id="PR00252">
    <property type="entry name" value="NRIONCHANNEL"/>
</dbReference>
<dbReference type="SUPFAM" id="SSF63712">
    <property type="entry name" value="Nicotinic receptor ligand binding domain-like"/>
    <property type="match status" value="1"/>
</dbReference>
<dbReference type="PROSITE" id="PS00236">
    <property type="entry name" value="NEUROTR_ION_CHANNEL"/>
    <property type="match status" value="1"/>
</dbReference>